<evidence type="ECO:0000255" key="1">
    <source>
        <dbReference type="HAMAP-Rule" id="MF_00318"/>
    </source>
</evidence>
<evidence type="ECO:0000256" key="2">
    <source>
        <dbReference type="SAM" id="MobiDB-lite"/>
    </source>
</evidence>
<evidence type="ECO:0000269" key="3">
    <source>
    </source>
</evidence>
<sequence length="475" mass="51118">MAKTNSTSKNNKLEIKSVFAYQAFDSRGFPTVACEVVLNDGSKGLSMVSSGASTGEKEALELRDGGTKYHGKGVTKAVNNINKKIGPKILGVDATLQTQIDEFMIELDGTKTKAKLGANAILAVSMAVCRAAAKSLNLPLYQYIAKKVAKVKGADFILPVPMLNVINGGAHADNTIDFQEFMIMPVGAKTMAKALQMASEVFHSLQKLLKAKKFNTNKGDEGGFAPNLKSAEEALDLMSQAVVDAGYALGKDVAFALDCAASEFYSKEKQAYVFKKAVKAGILSEEKGTKTTEQLISYLEDLTKKYPIVSIEDGLDENDWKGMESLTKKIGKKVQIVGDDTYCTNPELTSKGVSLSATNSVLIKLNQIGTLTETIQTINIAKKANWTAVVSHRSGETEDAFIADLAVALSTGQIKTGSMSRSERIAKYNRLLAIEMQLGNKAKYLGSKTFYNLSTPAATPKKSPAKKTTKAKSKK</sequence>
<gene>
    <name evidence="1" type="primary">eno</name>
    <name type="ordered locus">MYCGA5050</name>
    <name type="ORF">MGA_0209</name>
</gene>
<feature type="chain" id="PRO_0000133922" description="Enolase">
    <location>
        <begin position="1"/>
        <end position="475"/>
    </location>
</feature>
<feature type="region of interest" description="Disordered" evidence="2">
    <location>
        <begin position="454"/>
        <end position="475"/>
    </location>
</feature>
<feature type="compositionally biased region" description="Basic residues" evidence="2">
    <location>
        <begin position="463"/>
        <end position="475"/>
    </location>
</feature>
<feature type="active site" description="Proton donor" evidence="1">
    <location>
        <position position="221"/>
    </location>
</feature>
<feature type="active site" description="Proton acceptor" evidence="1">
    <location>
        <position position="364"/>
    </location>
</feature>
<feature type="binding site" evidence="1">
    <location>
        <position position="179"/>
    </location>
    <ligand>
        <name>(2R)-2-phosphoglycerate</name>
        <dbReference type="ChEBI" id="CHEBI:58289"/>
    </ligand>
</feature>
<feature type="binding site" evidence="1">
    <location>
        <position position="258"/>
    </location>
    <ligand>
        <name>Mg(2+)</name>
        <dbReference type="ChEBI" id="CHEBI:18420"/>
    </ligand>
</feature>
<feature type="binding site" evidence="1">
    <location>
        <position position="312"/>
    </location>
    <ligand>
        <name>Mg(2+)</name>
        <dbReference type="ChEBI" id="CHEBI:18420"/>
    </ligand>
</feature>
<feature type="binding site" evidence="1">
    <location>
        <position position="339"/>
    </location>
    <ligand>
        <name>Mg(2+)</name>
        <dbReference type="ChEBI" id="CHEBI:18420"/>
    </ligand>
</feature>
<feature type="binding site" evidence="1">
    <location>
        <position position="364"/>
    </location>
    <ligand>
        <name>(2R)-2-phosphoglycerate</name>
        <dbReference type="ChEBI" id="CHEBI:58289"/>
    </ligand>
</feature>
<feature type="binding site" evidence="1">
    <location>
        <position position="393"/>
    </location>
    <ligand>
        <name>(2R)-2-phosphoglycerate</name>
        <dbReference type="ChEBI" id="CHEBI:58289"/>
    </ligand>
</feature>
<feature type="binding site" evidence="1">
    <location>
        <position position="394"/>
    </location>
    <ligand>
        <name>(2R)-2-phosphoglycerate</name>
        <dbReference type="ChEBI" id="CHEBI:58289"/>
    </ligand>
</feature>
<feature type="binding site" evidence="1">
    <location>
        <position position="415"/>
    </location>
    <ligand>
        <name>(2R)-2-phosphoglycerate</name>
        <dbReference type="ChEBI" id="CHEBI:58289"/>
    </ligand>
</feature>
<keyword id="KW-0130">Cell adhesion</keyword>
<keyword id="KW-1003">Cell membrane</keyword>
<keyword id="KW-0963">Cytoplasm</keyword>
<keyword id="KW-0324">Glycolysis</keyword>
<keyword id="KW-0456">Lyase</keyword>
<keyword id="KW-0460">Magnesium</keyword>
<keyword id="KW-0472">Membrane</keyword>
<keyword id="KW-0479">Metal-binding</keyword>
<keyword id="KW-1185">Reference proteome</keyword>
<keyword id="KW-0964">Secreted</keyword>
<dbReference type="EC" id="4.2.1.11" evidence="1 3"/>
<dbReference type="EMBL" id="AE015450">
    <property type="protein sequence ID" value="AAP56855.1"/>
    <property type="molecule type" value="Genomic_DNA"/>
</dbReference>
<dbReference type="RefSeq" id="WP_011113754.1">
    <property type="nucleotide sequence ID" value="NC_004829.2"/>
</dbReference>
<dbReference type="SMR" id="Q7NAY0"/>
<dbReference type="GeneID" id="93510336"/>
<dbReference type="KEGG" id="mga:MGA_0209"/>
<dbReference type="PATRIC" id="fig|233150.7.peg.563"/>
<dbReference type="HOGENOM" id="CLU_031223_2_1_14"/>
<dbReference type="OrthoDB" id="9804716at2"/>
<dbReference type="UniPathway" id="UPA00109">
    <property type="reaction ID" value="UER00187"/>
</dbReference>
<dbReference type="Proteomes" id="UP000001418">
    <property type="component" value="Chromosome"/>
</dbReference>
<dbReference type="GO" id="GO:0009986">
    <property type="term" value="C:cell surface"/>
    <property type="evidence" value="ECO:0007669"/>
    <property type="project" value="UniProtKB-SubCell"/>
</dbReference>
<dbReference type="GO" id="GO:0005576">
    <property type="term" value="C:extracellular region"/>
    <property type="evidence" value="ECO:0007669"/>
    <property type="project" value="UniProtKB-SubCell"/>
</dbReference>
<dbReference type="GO" id="GO:0000015">
    <property type="term" value="C:phosphopyruvate hydratase complex"/>
    <property type="evidence" value="ECO:0007669"/>
    <property type="project" value="InterPro"/>
</dbReference>
<dbReference type="GO" id="GO:0005886">
    <property type="term" value="C:plasma membrane"/>
    <property type="evidence" value="ECO:0007669"/>
    <property type="project" value="UniProtKB-SubCell"/>
</dbReference>
<dbReference type="GO" id="GO:0000287">
    <property type="term" value="F:magnesium ion binding"/>
    <property type="evidence" value="ECO:0007669"/>
    <property type="project" value="UniProtKB-UniRule"/>
</dbReference>
<dbReference type="GO" id="GO:0004634">
    <property type="term" value="F:phosphopyruvate hydratase activity"/>
    <property type="evidence" value="ECO:0007669"/>
    <property type="project" value="UniProtKB-UniRule"/>
</dbReference>
<dbReference type="GO" id="GO:0007155">
    <property type="term" value="P:cell adhesion"/>
    <property type="evidence" value="ECO:0007669"/>
    <property type="project" value="UniProtKB-KW"/>
</dbReference>
<dbReference type="GO" id="GO:0006096">
    <property type="term" value="P:glycolytic process"/>
    <property type="evidence" value="ECO:0007669"/>
    <property type="project" value="UniProtKB-UniRule"/>
</dbReference>
<dbReference type="CDD" id="cd03313">
    <property type="entry name" value="enolase"/>
    <property type="match status" value="1"/>
</dbReference>
<dbReference type="FunFam" id="3.20.20.120:FF:000001">
    <property type="entry name" value="Enolase"/>
    <property type="match status" value="1"/>
</dbReference>
<dbReference type="Gene3D" id="3.20.20.120">
    <property type="entry name" value="Enolase-like C-terminal domain"/>
    <property type="match status" value="1"/>
</dbReference>
<dbReference type="Gene3D" id="3.30.390.10">
    <property type="entry name" value="Enolase-like, N-terminal domain"/>
    <property type="match status" value="1"/>
</dbReference>
<dbReference type="HAMAP" id="MF_00318">
    <property type="entry name" value="Enolase"/>
    <property type="match status" value="1"/>
</dbReference>
<dbReference type="InterPro" id="IPR000941">
    <property type="entry name" value="Enolase"/>
</dbReference>
<dbReference type="InterPro" id="IPR036849">
    <property type="entry name" value="Enolase-like_C_sf"/>
</dbReference>
<dbReference type="InterPro" id="IPR029017">
    <property type="entry name" value="Enolase-like_N"/>
</dbReference>
<dbReference type="InterPro" id="IPR020810">
    <property type="entry name" value="Enolase_C"/>
</dbReference>
<dbReference type="InterPro" id="IPR020809">
    <property type="entry name" value="Enolase_CS"/>
</dbReference>
<dbReference type="InterPro" id="IPR020811">
    <property type="entry name" value="Enolase_N"/>
</dbReference>
<dbReference type="NCBIfam" id="TIGR01060">
    <property type="entry name" value="eno"/>
    <property type="match status" value="1"/>
</dbReference>
<dbReference type="PANTHER" id="PTHR11902">
    <property type="entry name" value="ENOLASE"/>
    <property type="match status" value="1"/>
</dbReference>
<dbReference type="PANTHER" id="PTHR11902:SF1">
    <property type="entry name" value="ENOLASE"/>
    <property type="match status" value="1"/>
</dbReference>
<dbReference type="Pfam" id="PF00113">
    <property type="entry name" value="Enolase_C"/>
    <property type="match status" value="1"/>
</dbReference>
<dbReference type="Pfam" id="PF03952">
    <property type="entry name" value="Enolase_N"/>
    <property type="match status" value="1"/>
</dbReference>
<dbReference type="PIRSF" id="PIRSF001400">
    <property type="entry name" value="Enolase"/>
    <property type="match status" value="1"/>
</dbReference>
<dbReference type="PRINTS" id="PR00148">
    <property type="entry name" value="ENOLASE"/>
</dbReference>
<dbReference type="SFLD" id="SFLDS00001">
    <property type="entry name" value="Enolase"/>
    <property type="match status" value="1"/>
</dbReference>
<dbReference type="SFLD" id="SFLDF00002">
    <property type="entry name" value="enolase"/>
    <property type="match status" value="1"/>
</dbReference>
<dbReference type="SMART" id="SM01192">
    <property type="entry name" value="Enolase_C"/>
    <property type="match status" value="1"/>
</dbReference>
<dbReference type="SMART" id="SM01193">
    <property type="entry name" value="Enolase_N"/>
    <property type="match status" value="1"/>
</dbReference>
<dbReference type="SUPFAM" id="SSF51604">
    <property type="entry name" value="Enolase C-terminal domain-like"/>
    <property type="match status" value="1"/>
</dbReference>
<dbReference type="SUPFAM" id="SSF54826">
    <property type="entry name" value="Enolase N-terminal domain-like"/>
    <property type="match status" value="1"/>
</dbReference>
<dbReference type="PROSITE" id="PS00164">
    <property type="entry name" value="ENOLASE"/>
    <property type="match status" value="1"/>
</dbReference>
<protein>
    <recommendedName>
        <fullName evidence="1">Enolase</fullName>
        <ecNumber evidence="1 3">4.2.1.11</ecNumber>
    </recommendedName>
    <alternativeName>
        <fullName evidence="1">2-phospho-D-glycerate hydro-lyase</fullName>
    </alternativeName>
    <alternativeName>
        <fullName evidence="1">2-phosphoglycerate dehydratase</fullName>
    </alternativeName>
</protein>
<comment type="function">
    <text evidence="1 3">Catalyzes the reversible conversion of 2-phosphoglycerate (2-PG) into phosphoenolpyruvate (PEP) (PubMed:21664449). It is essential for the degradation of carbohydrates via glycolysis.</text>
</comment>
<comment type="function">
    <text evidence="3">'Moonlights' as a plasminogen receptor. Binds host (chicken) plasminogen; enolase antiserum inhibits M.gallisepticum adherence to chicken embryo fibroblasts (PubMed:21664449).</text>
</comment>
<comment type="catalytic activity">
    <reaction evidence="1 3">
        <text>(2R)-2-phosphoglycerate = phosphoenolpyruvate + H2O</text>
        <dbReference type="Rhea" id="RHEA:10164"/>
        <dbReference type="ChEBI" id="CHEBI:15377"/>
        <dbReference type="ChEBI" id="CHEBI:58289"/>
        <dbReference type="ChEBI" id="CHEBI:58702"/>
        <dbReference type="EC" id="4.2.1.11"/>
    </reaction>
    <physiologicalReaction direction="left-to-right" evidence="3">
        <dbReference type="Rhea" id="RHEA:10165"/>
    </physiologicalReaction>
</comment>
<comment type="cofactor">
    <cofactor evidence="1">
        <name>Mg(2+)</name>
        <dbReference type="ChEBI" id="CHEBI:18420"/>
    </cofactor>
    <text evidence="1">Binds a second Mg(2+) ion via substrate during catalysis.</text>
</comment>
<comment type="pathway">
    <text evidence="1">Carbohydrate degradation; glycolysis; pyruvate from D-glyceraldehyde 3-phosphate: step 4/5.</text>
</comment>
<comment type="subcellular location">
    <subcellularLocation>
        <location evidence="3">Cell membrane</location>
    </subcellularLocation>
    <subcellularLocation>
        <location evidence="1">Cytoplasm</location>
    </subcellularLocation>
    <subcellularLocation>
        <location evidence="1">Secreted</location>
    </subcellularLocation>
    <subcellularLocation>
        <location evidence="1 3">Cell surface</location>
    </subcellularLocation>
    <text evidence="1 3">Fractions of enolase are present in both the cytoplasm and on the cell surface (PubMed:21664449).</text>
</comment>
<comment type="similarity">
    <text evidence="1">Belongs to the enolase family.</text>
</comment>
<proteinExistence type="evidence at protein level"/>
<organism>
    <name type="scientific">Mycoplasmoides gallisepticum (strain R(low / passage 15 / clone 2))</name>
    <name type="common">Mycoplasma gallisepticum</name>
    <dbReference type="NCBI Taxonomy" id="710127"/>
    <lineage>
        <taxon>Bacteria</taxon>
        <taxon>Bacillati</taxon>
        <taxon>Mycoplasmatota</taxon>
        <taxon>Mycoplasmoidales</taxon>
        <taxon>Mycoplasmoidaceae</taxon>
        <taxon>Mycoplasmoides</taxon>
    </lineage>
</organism>
<reference key="1">
    <citation type="journal article" date="2003" name="Microbiology">
        <title>The complete genome sequence of the avian pathogen Mycoplasma gallisepticum strain R(low).</title>
        <authorList>
            <person name="Papazisi L."/>
            <person name="Gorton T.S."/>
            <person name="Kutish G."/>
            <person name="Markham P.F."/>
            <person name="Browning G.F."/>
            <person name="Nguyen D.K."/>
            <person name="Swartzell S."/>
            <person name="Madan A."/>
            <person name="Mahairas G."/>
            <person name="Geary S.J."/>
        </authorList>
    </citation>
    <scope>NUCLEOTIDE SEQUENCE [LARGE SCALE GENOMIC DNA]</scope>
    <source>
        <strain>R(low / passage 15 / clone 2)</strain>
    </source>
</reference>
<reference key="2">
    <citation type="journal article" date="2011" name="Microb. Pathog.">
        <title>The Mycoplasma gallisepticum alpha-enolase is cell surface-exposed and mediates adherence by binding to chicken plasminogen.</title>
        <authorList>
            <person name="Chen H."/>
            <person name="Yu S."/>
            <person name="Shen X."/>
            <person name="Chen D."/>
            <person name="Qiu X."/>
            <person name="Song C."/>
            <person name="Ding C."/>
        </authorList>
    </citation>
    <scope>FUNCTION</scope>
    <scope>CATALYTIC ACTIVITY</scope>
    <scope>SUBCELLULAR LOCATION</scope>
    <scope>BINDING TO HOST PLASMINOGEN</scope>
    <source>
        <strain>R(low)</strain>
    </source>
</reference>
<accession>Q7NAY0</accession>
<name>ENO_MYCGA</name>